<name>IDI2_LISMF</name>
<comment type="function">
    <text evidence="1">Involved in the biosynthesis of isoprenoids. Catalyzes the 1,3-allylic rearrangement of the homoallylic substrate isopentenyl (IPP) to its allylic isomer, dimethylallyl diphosphate (DMAPP).</text>
</comment>
<comment type="catalytic activity">
    <reaction evidence="1">
        <text>isopentenyl diphosphate = dimethylallyl diphosphate</text>
        <dbReference type="Rhea" id="RHEA:23284"/>
        <dbReference type="ChEBI" id="CHEBI:57623"/>
        <dbReference type="ChEBI" id="CHEBI:128769"/>
        <dbReference type="EC" id="5.3.3.2"/>
    </reaction>
</comment>
<comment type="cofactor">
    <cofactor evidence="1">
        <name>FMN</name>
        <dbReference type="ChEBI" id="CHEBI:58210"/>
    </cofactor>
</comment>
<comment type="cofactor">
    <cofactor evidence="1">
        <name>NADPH</name>
        <dbReference type="ChEBI" id="CHEBI:57783"/>
    </cofactor>
</comment>
<comment type="cofactor">
    <cofactor evidence="1">
        <name>Mg(2+)</name>
        <dbReference type="ChEBI" id="CHEBI:18420"/>
    </cofactor>
</comment>
<comment type="subunit">
    <text evidence="1">Homooctamer. Dimer of tetramers.</text>
</comment>
<comment type="subcellular location">
    <subcellularLocation>
        <location evidence="1">Cytoplasm</location>
    </subcellularLocation>
</comment>
<comment type="similarity">
    <text evidence="1">Belongs to the IPP isomerase type 2 family.</text>
</comment>
<proteinExistence type="inferred from homology"/>
<organism>
    <name type="scientific">Listeria monocytogenes serotype 4b (strain F2365)</name>
    <dbReference type="NCBI Taxonomy" id="265669"/>
    <lineage>
        <taxon>Bacteria</taxon>
        <taxon>Bacillati</taxon>
        <taxon>Bacillota</taxon>
        <taxon>Bacilli</taxon>
        <taxon>Bacillales</taxon>
        <taxon>Listeriaceae</taxon>
        <taxon>Listeria</taxon>
    </lineage>
</organism>
<reference key="1">
    <citation type="journal article" date="2004" name="Nucleic Acids Res.">
        <title>Whole genome comparisons of serotype 4b and 1/2a strains of the food-borne pathogen Listeria monocytogenes reveal new insights into the core genome components of this species.</title>
        <authorList>
            <person name="Nelson K.E."/>
            <person name="Fouts D.E."/>
            <person name="Mongodin E.F."/>
            <person name="Ravel J."/>
            <person name="DeBoy R.T."/>
            <person name="Kolonay J.F."/>
            <person name="Rasko D.A."/>
            <person name="Angiuoli S.V."/>
            <person name="Gill S.R."/>
            <person name="Paulsen I.T."/>
            <person name="Peterson J.D."/>
            <person name="White O."/>
            <person name="Nelson W.C."/>
            <person name="Nierman W.C."/>
            <person name="Beanan M.J."/>
            <person name="Brinkac L.M."/>
            <person name="Daugherty S.C."/>
            <person name="Dodson R.J."/>
            <person name="Durkin A.S."/>
            <person name="Madupu R."/>
            <person name="Haft D.H."/>
            <person name="Selengut J."/>
            <person name="Van Aken S.E."/>
            <person name="Khouri H.M."/>
            <person name="Fedorova N."/>
            <person name="Forberger H.A."/>
            <person name="Tran B."/>
            <person name="Kathariou S."/>
            <person name="Wonderling L.D."/>
            <person name="Uhlich G.A."/>
            <person name="Bayles D.O."/>
            <person name="Luchansky J.B."/>
            <person name="Fraser C.M."/>
        </authorList>
    </citation>
    <scope>NUCLEOTIDE SEQUENCE [LARGE SCALE GENOMIC DNA]</scope>
    <source>
        <strain>F2365</strain>
    </source>
</reference>
<protein>
    <recommendedName>
        <fullName evidence="1">Isopentenyl-diphosphate delta-isomerase</fullName>
        <shortName evidence="1">IPP isomerase</shortName>
        <ecNumber evidence="1">5.3.3.2</ecNumber>
    </recommendedName>
    <alternativeName>
        <fullName evidence="1">Isopentenyl diphosphate:dimethylallyl diphosphate isomerase</fullName>
    </alternativeName>
    <alternativeName>
        <fullName evidence="1">Isopentenyl pyrophosphate isomerase</fullName>
    </alternativeName>
    <alternativeName>
        <fullName evidence="1">Type 2 isopentenyl diphosphate isomerase</fullName>
        <shortName evidence="1">IDI-2</shortName>
    </alternativeName>
</protein>
<sequence length="358" mass="39424">MQKNDDLLRERRKDEHVALGVKQNEQLAPSSLEDIQLIGTSIPRYNVKDIDLTTTIVGTNVPFPLYINAMTGGSRHTKKINAELAEIAREVAIPMAVGSQSAALKNSSLIDTYKIVREINPNGMILANISPEVALQEGLRAIEMLEANALQIHINPAQELVMQEGDRSFSHWLTRIEEYVKLSPVPVVVKEVGFGMTRETVKTLADIGVQTVDLAGKGGTNFAQIENDRRRDQAYDFLLDWGISTGQALIDMQHQDAPKIAYLASGGIRNPLDIVKALALGADSVGMAGQIIYSLKKEGVTKTIEKLELWKEQLRGLFVLANAKNISELKTTPLIISGELAKWGALREIDLVKLANRK</sequence>
<dbReference type="EC" id="5.3.3.2" evidence="1"/>
<dbReference type="EMBL" id="AE017262">
    <property type="protein sequence ID" value="AAT04177.1"/>
    <property type="molecule type" value="Genomic_DNA"/>
</dbReference>
<dbReference type="RefSeq" id="WP_003727466.1">
    <property type="nucleotide sequence ID" value="NC_002973.6"/>
</dbReference>
<dbReference type="SMR" id="Q71ZT7"/>
<dbReference type="KEGG" id="lmf:LMOf2365_1402"/>
<dbReference type="HOGENOM" id="CLU_065515_0_0_9"/>
<dbReference type="GO" id="GO:0005737">
    <property type="term" value="C:cytoplasm"/>
    <property type="evidence" value="ECO:0007669"/>
    <property type="project" value="UniProtKB-SubCell"/>
</dbReference>
<dbReference type="GO" id="GO:0010181">
    <property type="term" value="F:FMN binding"/>
    <property type="evidence" value="ECO:0007669"/>
    <property type="project" value="UniProtKB-UniRule"/>
</dbReference>
<dbReference type="GO" id="GO:0004452">
    <property type="term" value="F:isopentenyl-diphosphate delta-isomerase activity"/>
    <property type="evidence" value="ECO:0007669"/>
    <property type="project" value="UniProtKB-UniRule"/>
</dbReference>
<dbReference type="GO" id="GO:0000287">
    <property type="term" value="F:magnesium ion binding"/>
    <property type="evidence" value="ECO:0007669"/>
    <property type="project" value="UniProtKB-UniRule"/>
</dbReference>
<dbReference type="GO" id="GO:0070402">
    <property type="term" value="F:NADPH binding"/>
    <property type="evidence" value="ECO:0007669"/>
    <property type="project" value="UniProtKB-UniRule"/>
</dbReference>
<dbReference type="GO" id="GO:0016491">
    <property type="term" value="F:oxidoreductase activity"/>
    <property type="evidence" value="ECO:0007669"/>
    <property type="project" value="InterPro"/>
</dbReference>
<dbReference type="GO" id="GO:0008299">
    <property type="term" value="P:isoprenoid biosynthetic process"/>
    <property type="evidence" value="ECO:0007669"/>
    <property type="project" value="UniProtKB-UniRule"/>
</dbReference>
<dbReference type="CDD" id="cd02811">
    <property type="entry name" value="IDI-2_FMN"/>
    <property type="match status" value="1"/>
</dbReference>
<dbReference type="FunFam" id="3.20.20.70:FF:000283">
    <property type="entry name" value="Isopentenyl-diphosphate delta-isomerase"/>
    <property type="match status" value="1"/>
</dbReference>
<dbReference type="Gene3D" id="3.20.20.70">
    <property type="entry name" value="Aldolase class I"/>
    <property type="match status" value="1"/>
</dbReference>
<dbReference type="HAMAP" id="MF_00354">
    <property type="entry name" value="Idi_2"/>
    <property type="match status" value="1"/>
</dbReference>
<dbReference type="InterPro" id="IPR013785">
    <property type="entry name" value="Aldolase_TIM"/>
</dbReference>
<dbReference type="InterPro" id="IPR000262">
    <property type="entry name" value="FMN-dep_DH"/>
</dbReference>
<dbReference type="InterPro" id="IPR011179">
    <property type="entry name" value="IPdP_isomerase"/>
</dbReference>
<dbReference type="NCBIfam" id="TIGR02151">
    <property type="entry name" value="IPP_isom_2"/>
    <property type="match status" value="1"/>
</dbReference>
<dbReference type="PANTHER" id="PTHR43665">
    <property type="entry name" value="ISOPENTENYL-DIPHOSPHATE DELTA-ISOMERASE"/>
    <property type="match status" value="1"/>
</dbReference>
<dbReference type="PANTHER" id="PTHR43665:SF1">
    <property type="entry name" value="ISOPENTENYL-DIPHOSPHATE DELTA-ISOMERASE"/>
    <property type="match status" value="1"/>
</dbReference>
<dbReference type="Pfam" id="PF01070">
    <property type="entry name" value="FMN_dh"/>
    <property type="match status" value="1"/>
</dbReference>
<dbReference type="PIRSF" id="PIRSF003314">
    <property type="entry name" value="IPP_isomerase"/>
    <property type="match status" value="1"/>
</dbReference>
<dbReference type="SUPFAM" id="SSF51395">
    <property type="entry name" value="FMN-linked oxidoreductases"/>
    <property type="match status" value="1"/>
</dbReference>
<accession>Q71ZT7</accession>
<gene>
    <name evidence="1" type="primary">fni</name>
    <name type="ordered locus">LMOf2365_1402</name>
</gene>
<evidence type="ECO:0000255" key="1">
    <source>
        <dbReference type="HAMAP-Rule" id="MF_00354"/>
    </source>
</evidence>
<keyword id="KW-0963">Cytoplasm</keyword>
<keyword id="KW-0285">Flavoprotein</keyword>
<keyword id="KW-0288">FMN</keyword>
<keyword id="KW-0413">Isomerase</keyword>
<keyword id="KW-0414">Isoprene biosynthesis</keyword>
<keyword id="KW-0460">Magnesium</keyword>
<keyword id="KW-0479">Metal-binding</keyword>
<keyword id="KW-0521">NADP</keyword>
<feature type="chain" id="PRO_0000134413" description="Isopentenyl-diphosphate delta-isomerase">
    <location>
        <begin position="1"/>
        <end position="358"/>
    </location>
</feature>
<feature type="binding site" evidence="1">
    <location>
        <begin position="12"/>
        <end position="13"/>
    </location>
    <ligand>
        <name>substrate</name>
    </ligand>
</feature>
<feature type="binding site" evidence="1">
    <location>
        <begin position="69"/>
        <end position="71"/>
    </location>
    <ligand>
        <name>FMN</name>
        <dbReference type="ChEBI" id="CHEBI:58210"/>
    </ligand>
</feature>
<feature type="binding site" evidence="1">
    <location>
        <position position="99"/>
    </location>
    <ligand>
        <name>FMN</name>
        <dbReference type="ChEBI" id="CHEBI:58210"/>
    </ligand>
</feature>
<feature type="binding site" evidence="1">
    <location>
        <position position="128"/>
    </location>
    <ligand>
        <name>FMN</name>
        <dbReference type="ChEBI" id="CHEBI:58210"/>
    </ligand>
</feature>
<feature type="binding site" evidence="1">
    <location>
        <position position="158"/>
    </location>
    <ligand>
        <name>substrate</name>
    </ligand>
</feature>
<feature type="binding site" evidence="1">
    <location>
        <position position="159"/>
    </location>
    <ligand>
        <name>Mg(2+)</name>
        <dbReference type="ChEBI" id="CHEBI:18420"/>
    </ligand>
</feature>
<feature type="binding site" evidence="1">
    <location>
        <position position="190"/>
    </location>
    <ligand>
        <name>FMN</name>
        <dbReference type="ChEBI" id="CHEBI:58210"/>
    </ligand>
</feature>
<feature type="binding site" evidence="1">
    <location>
        <position position="220"/>
    </location>
    <ligand>
        <name>FMN</name>
        <dbReference type="ChEBI" id="CHEBI:58210"/>
    </ligand>
</feature>
<feature type="binding site" evidence="1">
    <location>
        <begin position="267"/>
        <end position="269"/>
    </location>
    <ligand>
        <name>FMN</name>
        <dbReference type="ChEBI" id="CHEBI:58210"/>
    </ligand>
</feature>
<feature type="binding site" evidence="1">
    <location>
        <begin position="288"/>
        <end position="289"/>
    </location>
    <ligand>
        <name>FMN</name>
        <dbReference type="ChEBI" id="CHEBI:58210"/>
    </ligand>
</feature>